<dbReference type="EMBL" id="AC115795">
    <property type="status" value="NOT_ANNOTATED_CDS"/>
    <property type="molecule type" value="Genomic_DNA"/>
</dbReference>
<dbReference type="EMBL" id="CH466529">
    <property type="protein sequence ID" value="EDL19832.1"/>
    <property type="status" value="ALT_INIT"/>
    <property type="molecule type" value="Genomic_DNA"/>
</dbReference>
<dbReference type="RefSeq" id="NP_001095016.1">
    <property type="nucleotide sequence ID" value="NM_001101546.1"/>
</dbReference>
<dbReference type="SMR" id="D3Z1U7"/>
<dbReference type="FunCoup" id="D3Z1U7">
    <property type="interactions" value="601"/>
</dbReference>
<dbReference type="STRING" id="10090.ENSMUSP00000107628"/>
<dbReference type="GlyGen" id="D3Z1U7">
    <property type="glycosylation" value="2 sites, 1 O-linked glycan (2 sites)"/>
</dbReference>
<dbReference type="iPTMnet" id="D3Z1U7"/>
<dbReference type="PhosphoSitePlus" id="D3Z1U7"/>
<dbReference type="PaxDb" id="10090-ENSMUSP00000107628"/>
<dbReference type="ProteomicsDB" id="258926"/>
<dbReference type="Antibodypedia" id="81983">
    <property type="antibodies" value="2 antibodies from 2 providers"/>
</dbReference>
<dbReference type="Ensembl" id="ENSMUST00000111997.3">
    <property type="protein sequence ID" value="ENSMUSP00000107628.3"/>
    <property type="gene ID" value="ENSMUSG00000079278.4"/>
</dbReference>
<dbReference type="GeneID" id="545798"/>
<dbReference type="KEGG" id="mmu:545798"/>
<dbReference type="AGR" id="MGI:3651514"/>
<dbReference type="CTD" id="387890"/>
<dbReference type="MGI" id="MGI:3651514">
    <property type="gene designation" value="Tmem233"/>
</dbReference>
<dbReference type="VEuPathDB" id="HostDB:ENSMUSG00000079278"/>
<dbReference type="eggNOG" id="ENOG502S62Q">
    <property type="taxonomic scope" value="Eukaryota"/>
</dbReference>
<dbReference type="GeneTree" id="ENSGT00940000162372"/>
<dbReference type="InParanoid" id="D3Z1U7"/>
<dbReference type="OMA" id="LIAAYCM"/>
<dbReference type="OrthoDB" id="9946633at2759"/>
<dbReference type="TreeFam" id="TF331357"/>
<dbReference type="BioGRID-ORCS" id="545798">
    <property type="hits" value="1 hit in 77 CRISPR screens"/>
</dbReference>
<dbReference type="ChiTaRS" id="Tmem233">
    <property type="organism name" value="mouse"/>
</dbReference>
<dbReference type="PRO" id="PR:D3Z1U7"/>
<dbReference type="Proteomes" id="UP000000589">
    <property type="component" value="Chromosome 5"/>
</dbReference>
<dbReference type="RNAct" id="D3Z1U7">
    <property type="molecule type" value="protein"/>
</dbReference>
<dbReference type="Bgee" id="ENSMUSG00000079278">
    <property type="expression patterns" value="Expressed in skeletal muscle tissue and 10 other cell types or tissues"/>
</dbReference>
<dbReference type="ExpressionAtlas" id="D3Z1U7">
    <property type="expression patterns" value="baseline and differential"/>
</dbReference>
<dbReference type="GO" id="GO:0005886">
    <property type="term" value="C:plasma membrane"/>
    <property type="evidence" value="ECO:0007669"/>
    <property type="project" value="Ensembl"/>
</dbReference>
<dbReference type="InterPro" id="IPR051423">
    <property type="entry name" value="CD225/Dispanin"/>
</dbReference>
<dbReference type="InterPro" id="IPR007593">
    <property type="entry name" value="CD225/Dispanin_fam"/>
</dbReference>
<dbReference type="PANTHER" id="PTHR14948">
    <property type="entry name" value="NG5"/>
    <property type="match status" value="1"/>
</dbReference>
<dbReference type="PANTHER" id="PTHR14948:SF19">
    <property type="entry name" value="TRANSMEMBRANE PROTEIN 233"/>
    <property type="match status" value="1"/>
</dbReference>
<dbReference type="Pfam" id="PF04505">
    <property type="entry name" value="CD225"/>
    <property type="match status" value="1"/>
</dbReference>
<keyword id="KW-0472">Membrane</keyword>
<keyword id="KW-1185">Reference proteome</keyword>
<keyword id="KW-0812">Transmembrane</keyword>
<keyword id="KW-1133">Transmembrane helix</keyword>
<gene>
    <name evidence="6" type="primary">Tmem233</name>
</gene>
<sequence>MSQYASRSDSKGALDSSSPEAYTEDDKTEEDIPAPSNYLWLTIISCFCPAYPVNIVALVFSIMSLNSYNDGDYEGARRLGRNAKWVAIASIIIGLVIIGVSCAVHFSRNP</sequence>
<evidence type="ECO:0000250" key="1">
    <source>
        <dbReference type="UniProtKB" id="B4DJY2"/>
    </source>
</evidence>
<evidence type="ECO:0000250" key="2">
    <source>
        <dbReference type="UniProtKB" id="E9PUL5"/>
    </source>
</evidence>
<evidence type="ECO:0000255" key="3"/>
<evidence type="ECO:0000256" key="4">
    <source>
        <dbReference type="SAM" id="MobiDB-lite"/>
    </source>
</evidence>
<evidence type="ECO:0000269" key="5">
    <source>
    </source>
</evidence>
<evidence type="ECO:0000303" key="6">
    <source>
    </source>
</evidence>
<evidence type="ECO:0000305" key="7"/>
<evidence type="ECO:0000305" key="8">
    <source>
    </source>
</evidence>
<name>TM233_MOUSE</name>
<protein>
    <recommendedName>
        <fullName>Transmembrane protein 233</fullName>
    </recommendedName>
    <alternativeName>
        <fullName>Dispanin subfamily B member 2</fullName>
        <shortName>DSPB2</shortName>
    </alternativeName>
</protein>
<reference key="1">
    <citation type="journal article" date="2009" name="PLoS Biol.">
        <title>Lineage-specific biology revealed by a finished genome assembly of the mouse.</title>
        <authorList>
            <person name="Church D.M."/>
            <person name="Goodstadt L."/>
            <person name="Hillier L.W."/>
            <person name="Zody M.C."/>
            <person name="Goldstein S."/>
            <person name="She X."/>
            <person name="Bult C.J."/>
            <person name="Agarwala R."/>
            <person name="Cherry J.L."/>
            <person name="DiCuccio M."/>
            <person name="Hlavina W."/>
            <person name="Kapustin Y."/>
            <person name="Meric P."/>
            <person name="Maglott D."/>
            <person name="Birtle Z."/>
            <person name="Marques A.C."/>
            <person name="Graves T."/>
            <person name="Zhou S."/>
            <person name="Teague B."/>
            <person name="Potamousis K."/>
            <person name="Churas C."/>
            <person name="Place M."/>
            <person name="Herschleb J."/>
            <person name="Runnheim R."/>
            <person name="Forrest D."/>
            <person name="Amos-Landgraf J."/>
            <person name="Schwartz D.C."/>
            <person name="Cheng Z."/>
            <person name="Lindblad-Toh K."/>
            <person name="Eichler E.E."/>
            <person name="Ponting C.P."/>
        </authorList>
    </citation>
    <scope>NUCLEOTIDE SEQUENCE [LARGE SCALE GENOMIC DNA]</scope>
    <source>
        <strain>C57BL/6J</strain>
    </source>
</reference>
<reference key="2">
    <citation type="submission" date="2005-09" db="EMBL/GenBank/DDBJ databases">
        <authorList>
            <person name="Mural R.J."/>
            <person name="Adams M.D."/>
            <person name="Myers E.W."/>
            <person name="Smith H.O."/>
            <person name="Venter J.C."/>
        </authorList>
    </citation>
    <scope>NUCLEOTIDE SEQUENCE [LARGE SCALE GENOMIC DNA]</scope>
</reference>
<reference key="3">
    <citation type="journal article" date="2012" name="PLoS ONE">
        <title>The dispanins: a novel gene family of ancient origin that contains 14 human members.</title>
        <authorList>
            <person name="Sallman Almen M."/>
            <person name="Bringeland N."/>
            <person name="Fredriksson R."/>
            <person name="Schioth H.B."/>
        </authorList>
    </citation>
    <scope>GENE FAMILY</scope>
</reference>
<reference key="4">
    <citation type="journal article" date="2023" name="Nat. Commun.">
        <title>Pain-causing stinging nettle toxins target TMEM233 to modulate NaV1.7 function.</title>
        <authorList>
            <person name="Jami S."/>
            <person name="Deuis J.R."/>
            <person name="Klasfauseweh T."/>
            <person name="Cheng X."/>
            <person name="Kurdyukov S."/>
            <person name="Chung F."/>
            <person name="Okorokov A.L."/>
            <person name="Li S."/>
            <person name="Zhang J."/>
            <person name="Cristofori-Armstrong B."/>
            <person name="Israel M.R."/>
            <person name="Ju R.J."/>
            <person name="Robinson S.D."/>
            <person name="Zhao P."/>
            <person name="Ragnarsson L."/>
            <person name="Andersson A."/>
            <person name="Tran P."/>
            <person name="Schendel V."/>
            <person name="McMahon K.L."/>
            <person name="Tran H.N.T."/>
            <person name="Chin Y.K."/>
            <person name="Zhu Y."/>
            <person name="Liu J."/>
            <person name="Crawford T."/>
            <person name="Purushothamvasan S."/>
            <person name="Habib A.M."/>
            <person name="Andersson D.A."/>
            <person name="Rash L.D."/>
            <person name="Wood J.N."/>
            <person name="Zhao J."/>
            <person name="Stehbens S.J."/>
            <person name="Mobli M."/>
            <person name="Leffler A."/>
            <person name="Jiang D."/>
            <person name="Cox J.J."/>
            <person name="Waxman S.G."/>
            <person name="Dib-Hajj S.D."/>
            <person name="Gregory Neely G."/>
            <person name="Durek T."/>
            <person name="Vetter I."/>
        </authorList>
    </citation>
    <scope>FUNCTION</scope>
    <scope>SUBUNIT</scope>
    <scope>TISSUE SPECIFICITY</scope>
    <scope>DISRUPTION PHENOTYPE</scope>
</reference>
<proteinExistence type="evidence at protein level"/>
<feature type="chain" id="PRO_0000394963" description="Transmembrane protein 233">
    <location>
        <begin position="1"/>
        <end position="110"/>
    </location>
</feature>
<feature type="topological domain" description="Cytoplasmic" evidence="1 3">
    <location>
        <begin position="1"/>
        <end position="42"/>
    </location>
</feature>
<feature type="intramembrane region" description="Helical" evidence="1 2 3">
    <location>
        <begin position="43"/>
        <end position="63"/>
    </location>
</feature>
<feature type="topological domain" description="Cytoplasmic" evidence="3">
    <location>
        <begin position="64"/>
        <end position="85"/>
    </location>
</feature>
<feature type="transmembrane region" description="Helical" evidence="1 3">
    <location>
        <begin position="86"/>
        <end position="106"/>
    </location>
</feature>
<feature type="topological domain" description="Extracellular" evidence="1 3">
    <location>
        <begin position="107"/>
        <end position="110"/>
    </location>
</feature>
<feature type="region of interest" description="Disordered" evidence="4">
    <location>
        <begin position="1"/>
        <end position="32"/>
    </location>
</feature>
<feature type="compositionally biased region" description="Acidic residues" evidence="4">
    <location>
        <begin position="22"/>
        <end position="32"/>
    </location>
</feature>
<comment type="function">
    <text evidence="5">Probable accessory protein of voltage-gated sodium channels.</text>
</comment>
<comment type="subunit">
    <text evidence="1 8">Interacts with the giant stinging tree toxin ExTxA (P0DQP3) (Probable). Interacts with Nav1.7/SCN9A (Probable). Interacts with Nav1.1/SCN1A, Nav1.2/SCN2A, Nav1.3/SCN3A, Nav1.4/SCN4A, Nav1.5/SCN5A, and Nav1.6/SCN8A (By similarity).</text>
</comment>
<comment type="subcellular location">
    <subcellularLocation>
        <location evidence="1">Membrane</location>
        <topology evidence="1">Single-pass membrane protein</topology>
    </subcellularLocation>
</comment>
<comment type="tissue specificity">
    <text evidence="5">Probably expressed in nociceptive neurons. Detected in dorsal root ganglion neurons.</text>
</comment>
<comment type="disruption phenotype">
    <text evidence="5">Decrease in pain behaviors (paw licks and flinches) following intraplantar injection of ExTxA toxin.</text>
</comment>
<comment type="similarity">
    <text evidence="7">Belongs to the CD225/Dispanin family.</text>
</comment>
<comment type="sequence caution" evidence="7">
    <conflict type="erroneous initiation">
        <sequence resource="EMBL-CDS" id="EDL19832"/>
    </conflict>
    <text>Extended N-terminus.</text>
</comment>
<organism>
    <name type="scientific">Mus musculus</name>
    <name type="common">Mouse</name>
    <dbReference type="NCBI Taxonomy" id="10090"/>
    <lineage>
        <taxon>Eukaryota</taxon>
        <taxon>Metazoa</taxon>
        <taxon>Chordata</taxon>
        <taxon>Craniata</taxon>
        <taxon>Vertebrata</taxon>
        <taxon>Euteleostomi</taxon>
        <taxon>Mammalia</taxon>
        <taxon>Eutheria</taxon>
        <taxon>Euarchontoglires</taxon>
        <taxon>Glires</taxon>
        <taxon>Rodentia</taxon>
        <taxon>Myomorpha</taxon>
        <taxon>Muroidea</taxon>
        <taxon>Muridae</taxon>
        <taxon>Murinae</taxon>
        <taxon>Mus</taxon>
        <taxon>Mus</taxon>
    </lineage>
</organism>
<accession>D3Z1U7</accession>